<organism>
    <name type="scientific">Ralstonia pickettii (strain 12J)</name>
    <dbReference type="NCBI Taxonomy" id="402626"/>
    <lineage>
        <taxon>Bacteria</taxon>
        <taxon>Pseudomonadati</taxon>
        <taxon>Pseudomonadota</taxon>
        <taxon>Betaproteobacteria</taxon>
        <taxon>Burkholderiales</taxon>
        <taxon>Burkholderiaceae</taxon>
        <taxon>Ralstonia</taxon>
    </lineage>
</organism>
<name>DAPB_RALPJ</name>
<keyword id="KW-0028">Amino-acid biosynthesis</keyword>
<keyword id="KW-0963">Cytoplasm</keyword>
<keyword id="KW-0220">Diaminopimelate biosynthesis</keyword>
<keyword id="KW-0457">Lysine biosynthesis</keyword>
<keyword id="KW-0520">NAD</keyword>
<keyword id="KW-0521">NADP</keyword>
<keyword id="KW-0560">Oxidoreductase</keyword>
<proteinExistence type="inferred from homology"/>
<protein>
    <recommendedName>
        <fullName evidence="1">4-hydroxy-tetrahydrodipicolinate reductase</fullName>
        <shortName evidence="1">HTPA reductase</shortName>
        <ecNumber evidence="1">1.17.1.8</ecNumber>
    </recommendedName>
</protein>
<accession>B2UCA2</accession>
<reference key="1">
    <citation type="submission" date="2008-05" db="EMBL/GenBank/DDBJ databases">
        <title>Complete sequence of chromosome 1 of Ralstonia pickettii 12J.</title>
        <authorList>
            <person name="Lucas S."/>
            <person name="Copeland A."/>
            <person name="Lapidus A."/>
            <person name="Glavina del Rio T."/>
            <person name="Dalin E."/>
            <person name="Tice H."/>
            <person name="Bruce D."/>
            <person name="Goodwin L."/>
            <person name="Pitluck S."/>
            <person name="Meincke L."/>
            <person name="Brettin T."/>
            <person name="Detter J.C."/>
            <person name="Han C."/>
            <person name="Kuske C.R."/>
            <person name="Schmutz J."/>
            <person name="Larimer F."/>
            <person name="Land M."/>
            <person name="Hauser L."/>
            <person name="Kyrpides N."/>
            <person name="Mikhailova N."/>
            <person name="Marsh T."/>
            <person name="Richardson P."/>
        </authorList>
    </citation>
    <scope>NUCLEOTIDE SEQUENCE [LARGE SCALE GENOMIC DNA]</scope>
    <source>
        <strain>12J</strain>
    </source>
</reference>
<sequence>MKIAIAGASGRMGQMLIDTVLRTPGVTLGAALDRPGSDAVGQDAGVKLGKTTGVIVTDDVRAGLSQADVLIDFTRPDATLNHLNVARELGTAVVIGTTGFTAEQKASFKTYGESIGVVWAPNMSVGVNATFKLIEVAAKILAQGYDVEIIEAHHKHKIDAPSGTALKMGEIVAEAQGTKLADRAVYAREGETGPRELGTIGFATVRGGDIVGDHTVLFAGDGERIEITHRSNTRQSYAEGAVRAAVYVAGKKGLYDMNDVLGL</sequence>
<gene>
    <name evidence="1" type="primary">dapB</name>
    <name type="ordered locus">Rpic_2984</name>
</gene>
<evidence type="ECO:0000255" key="1">
    <source>
        <dbReference type="HAMAP-Rule" id="MF_00102"/>
    </source>
</evidence>
<evidence type="ECO:0000305" key="2"/>
<comment type="function">
    <text evidence="1">Catalyzes the conversion of 4-hydroxy-tetrahydrodipicolinate (HTPA) to tetrahydrodipicolinate.</text>
</comment>
<comment type="catalytic activity">
    <reaction evidence="1">
        <text>(S)-2,3,4,5-tetrahydrodipicolinate + NAD(+) + H2O = (2S,4S)-4-hydroxy-2,3,4,5-tetrahydrodipicolinate + NADH + H(+)</text>
        <dbReference type="Rhea" id="RHEA:35323"/>
        <dbReference type="ChEBI" id="CHEBI:15377"/>
        <dbReference type="ChEBI" id="CHEBI:15378"/>
        <dbReference type="ChEBI" id="CHEBI:16845"/>
        <dbReference type="ChEBI" id="CHEBI:57540"/>
        <dbReference type="ChEBI" id="CHEBI:57945"/>
        <dbReference type="ChEBI" id="CHEBI:67139"/>
        <dbReference type="EC" id="1.17.1.8"/>
    </reaction>
</comment>
<comment type="catalytic activity">
    <reaction evidence="1">
        <text>(S)-2,3,4,5-tetrahydrodipicolinate + NADP(+) + H2O = (2S,4S)-4-hydroxy-2,3,4,5-tetrahydrodipicolinate + NADPH + H(+)</text>
        <dbReference type="Rhea" id="RHEA:35331"/>
        <dbReference type="ChEBI" id="CHEBI:15377"/>
        <dbReference type="ChEBI" id="CHEBI:15378"/>
        <dbReference type="ChEBI" id="CHEBI:16845"/>
        <dbReference type="ChEBI" id="CHEBI:57783"/>
        <dbReference type="ChEBI" id="CHEBI:58349"/>
        <dbReference type="ChEBI" id="CHEBI:67139"/>
        <dbReference type="EC" id="1.17.1.8"/>
    </reaction>
</comment>
<comment type="pathway">
    <text evidence="1">Amino-acid biosynthesis; L-lysine biosynthesis via DAP pathway; (S)-tetrahydrodipicolinate from L-aspartate: step 4/4.</text>
</comment>
<comment type="subcellular location">
    <subcellularLocation>
        <location evidence="1">Cytoplasm</location>
    </subcellularLocation>
</comment>
<comment type="similarity">
    <text evidence="1">Belongs to the DapB family.</text>
</comment>
<comment type="caution">
    <text evidence="2">Was originally thought to be a dihydrodipicolinate reductase (DHDPR), catalyzing the conversion of dihydrodipicolinate to tetrahydrodipicolinate. However, it was shown in E.coli that the substrate of the enzymatic reaction is not dihydrodipicolinate (DHDP) but in fact (2S,4S)-4-hydroxy-2,3,4,5-tetrahydrodipicolinic acid (HTPA), the product released by the DapA-catalyzed reaction.</text>
</comment>
<dbReference type="EC" id="1.17.1.8" evidence="1"/>
<dbReference type="EMBL" id="CP001068">
    <property type="protein sequence ID" value="ACD28107.1"/>
    <property type="molecule type" value="Genomic_DNA"/>
</dbReference>
<dbReference type="SMR" id="B2UCA2"/>
<dbReference type="STRING" id="402626.Rpic_2984"/>
<dbReference type="KEGG" id="rpi:Rpic_2984"/>
<dbReference type="PATRIC" id="fig|402626.5.peg.4120"/>
<dbReference type="eggNOG" id="COG0289">
    <property type="taxonomic scope" value="Bacteria"/>
</dbReference>
<dbReference type="HOGENOM" id="CLU_047479_2_1_4"/>
<dbReference type="UniPathway" id="UPA00034">
    <property type="reaction ID" value="UER00018"/>
</dbReference>
<dbReference type="GO" id="GO:0005829">
    <property type="term" value="C:cytosol"/>
    <property type="evidence" value="ECO:0007669"/>
    <property type="project" value="TreeGrafter"/>
</dbReference>
<dbReference type="GO" id="GO:0008839">
    <property type="term" value="F:4-hydroxy-tetrahydrodipicolinate reductase"/>
    <property type="evidence" value="ECO:0007669"/>
    <property type="project" value="UniProtKB-EC"/>
</dbReference>
<dbReference type="GO" id="GO:0051287">
    <property type="term" value="F:NAD binding"/>
    <property type="evidence" value="ECO:0007669"/>
    <property type="project" value="UniProtKB-UniRule"/>
</dbReference>
<dbReference type="GO" id="GO:0050661">
    <property type="term" value="F:NADP binding"/>
    <property type="evidence" value="ECO:0007669"/>
    <property type="project" value="UniProtKB-UniRule"/>
</dbReference>
<dbReference type="GO" id="GO:0016726">
    <property type="term" value="F:oxidoreductase activity, acting on CH or CH2 groups, NAD or NADP as acceptor"/>
    <property type="evidence" value="ECO:0007669"/>
    <property type="project" value="UniProtKB-UniRule"/>
</dbReference>
<dbReference type="GO" id="GO:0019877">
    <property type="term" value="P:diaminopimelate biosynthetic process"/>
    <property type="evidence" value="ECO:0007669"/>
    <property type="project" value="UniProtKB-UniRule"/>
</dbReference>
<dbReference type="GO" id="GO:0009089">
    <property type="term" value="P:lysine biosynthetic process via diaminopimelate"/>
    <property type="evidence" value="ECO:0007669"/>
    <property type="project" value="UniProtKB-UniRule"/>
</dbReference>
<dbReference type="CDD" id="cd02274">
    <property type="entry name" value="DHDPR_N"/>
    <property type="match status" value="1"/>
</dbReference>
<dbReference type="FunFam" id="3.30.360.10:FF:000004">
    <property type="entry name" value="4-hydroxy-tetrahydrodipicolinate reductase"/>
    <property type="match status" value="1"/>
</dbReference>
<dbReference type="FunFam" id="3.40.50.720:FF:000048">
    <property type="entry name" value="4-hydroxy-tetrahydrodipicolinate reductase"/>
    <property type="match status" value="1"/>
</dbReference>
<dbReference type="Gene3D" id="3.30.360.10">
    <property type="entry name" value="Dihydrodipicolinate Reductase, domain 2"/>
    <property type="match status" value="1"/>
</dbReference>
<dbReference type="Gene3D" id="3.40.50.720">
    <property type="entry name" value="NAD(P)-binding Rossmann-like Domain"/>
    <property type="match status" value="1"/>
</dbReference>
<dbReference type="HAMAP" id="MF_00102">
    <property type="entry name" value="DapB"/>
    <property type="match status" value="1"/>
</dbReference>
<dbReference type="InterPro" id="IPR022663">
    <property type="entry name" value="DapB_C"/>
</dbReference>
<dbReference type="InterPro" id="IPR000846">
    <property type="entry name" value="DapB_N"/>
</dbReference>
<dbReference type="InterPro" id="IPR022664">
    <property type="entry name" value="DapB_N_CS"/>
</dbReference>
<dbReference type="InterPro" id="IPR023940">
    <property type="entry name" value="DHDPR_bac"/>
</dbReference>
<dbReference type="InterPro" id="IPR036291">
    <property type="entry name" value="NAD(P)-bd_dom_sf"/>
</dbReference>
<dbReference type="NCBIfam" id="TIGR00036">
    <property type="entry name" value="dapB"/>
    <property type="match status" value="1"/>
</dbReference>
<dbReference type="PANTHER" id="PTHR20836:SF0">
    <property type="entry name" value="4-HYDROXY-TETRAHYDRODIPICOLINATE REDUCTASE 1, CHLOROPLASTIC-RELATED"/>
    <property type="match status" value="1"/>
</dbReference>
<dbReference type="PANTHER" id="PTHR20836">
    <property type="entry name" value="DIHYDRODIPICOLINATE REDUCTASE"/>
    <property type="match status" value="1"/>
</dbReference>
<dbReference type="Pfam" id="PF05173">
    <property type="entry name" value="DapB_C"/>
    <property type="match status" value="1"/>
</dbReference>
<dbReference type="Pfam" id="PF01113">
    <property type="entry name" value="DapB_N"/>
    <property type="match status" value="1"/>
</dbReference>
<dbReference type="PIRSF" id="PIRSF000161">
    <property type="entry name" value="DHPR"/>
    <property type="match status" value="1"/>
</dbReference>
<dbReference type="SUPFAM" id="SSF55347">
    <property type="entry name" value="Glyceraldehyde-3-phosphate dehydrogenase-like, C-terminal domain"/>
    <property type="match status" value="1"/>
</dbReference>
<dbReference type="SUPFAM" id="SSF51735">
    <property type="entry name" value="NAD(P)-binding Rossmann-fold domains"/>
    <property type="match status" value="1"/>
</dbReference>
<dbReference type="PROSITE" id="PS01298">
    <property type="entry name" value="DAPB"/>
    <property type="match status" value="1"/>
</dbReference>
<feature type="chain" id="PRO_1000093992" description="4-hydroxy-tetrahydrodipicolinate reductase">
    <location>
        <begin position="1"/>
        <end position="263"/>
    </location>
</feature>
<feature type="active site" description="Proton donor/acceptor" evidence="1">
    <location>
        <position position="153"/>
    </location>
</feature>
<feature type="active site" description="Proton donor" evidence="1">
    <location>
        <position position="157"/>
    </location>
</feature>
<feature type="binding site" evidence="1">
    <location>
        <begin position="7"/>
        <end position="12"/>
    </location>
    <ligand>
        <name>NAD(+)</name>
        <dbReference type="ChEBI" id="CHEBI:57540"/>
    </ligand>
</feature>
<feature type="binding site" evidence="1">
    <location>
        <position position="33"/>
    </location>
    <ligand>
        <name>NAD(+)</name>
        <dbReference type="ChEBI" id="CHEBI:57540"/>
    </ligand>
</feature>
<feature type="binding site" evidence="1">
    <location>
        <position position="34"/>
    </location>
    <ligand>
        <name>NADP(+)</name>
        <dbReference type="ChEBI" id="CHEBI:58349"/>
    </ligand>
</feature>
<feature type="binding site" evidence="1">
    <location>
        <begin position="96"/>
        <end position="98"/>
    </location>
    <ligand>
        <name>NAD(+)</name>
        <dbReference type="ChEBI" id="CHEBI:57540"/>
    </ligand>
</feature>
<feature type="binding site" evidence="1">
    <location>
        <begin position="120"/>
        <end position="123"/>
    </location>
    <ligand>
        <name>NAD(+)</name>
        <dbReference type="ChEBI" id="CHEBI:57540"/>
    </ligand>
</feature>
<feature type="binding site" evidence="1">
    <location>
        <position position="154"/>
    </location>
    <ligand>
        <name>(S)-2,3,4,5-tetrahydrodipicolinate</name>
        <dbReference type="ChEBI" id="CHEBI:16845"/>
    </ligand>
</feature>
<feature type="binding site" evidence="1">
    <location>
        <begin position="163"/>
        <end position="164"/>
    </location>
    <ligand>
        <name>(S)-2,3,4,5-tetrahydrodipicolinate</name>
        <dbReference type="ChEBI" id="CHEBI:16845"/>
    </ligand>
</feature>